<feature type="chain" id="PRO_0000056614" description="Peroxiredoxin">
    <location>
        <begin position="1"/>
        <end position="179"/>
    </location>
</feature>
<feature type="domain" description="Thioredoxin" evidence="3">
    <location>
        <begin position="2"/>
        <end position="152"/>
    </location>
</feature>
<feature type="active site" description="Cysteine sulfenic acid (-SOH) intermediate (for peroxiredoxin activity)" evidence="2">
    <location>
        <position position="56"/>
    </location>
</feature>
<protein>
    <recommendedName>
        <fullName>Peroxiredoxin</fullName>
        <shortName>Prx</shortName>
        <ecNumber evidence="2">1.11.1.27</ecNumber>
    </recommendedName>
    <alternativeName>
        <fullName evidence="4">Glutathione-dependent peroxiredoxin</fullName>
    </alternativeName>
</protein>
<reference key="1">
    <citation type="journal article" date="1998" name="J. Bacteriol.">
        <title>Differential regulation of the Rhizobium etli rpoN2 gene expression during symbiosis and free-living growth.</title>
        <authorList>
            <person name="Michiels J."/>
            <person name="Moris M."/>
            <person name="Dombrecht B."/>
            <person name="Verreth C."/>
            <person name="Vanderleyden J."/>
        </authorList>
    </citation>
    <scope>NUCLEOTIDE SEQUENCE [GENOMIC DNA]</scope>
    <source>
        <strain>CNPAF512</strain>
    </source>
</reference>
<reference key="2">
    <citation type="submission" date="2003-04" db="EMBL/GenBank/DDBJ databases">
        <authorList>
            <person name="Michiels J."/>
        </authorList>
    </citation>
    <scope>SEQUENCE REVISION TO 30-31; 34 AND 72</scope>
</reference>
<comment type="function">
    <text evidence="2">Thiol-specific peroxidase that catalyzes the reduction of hydrogen peroxide and organic hydroperoxides to water and alcohols, respectively. Plays a role in cell protection against oxidative stress by detoxifying peroxides.</text>
</comment>
<comment type="catalytic activity">
    <reaction evidence="2">
        <text>a hydroperoxide + 2 glutathione = an alcohol + glutathione disulfide + H2O</text>
        <dbReference type="Rhea" id="RHEA:62632"/>
        <dbReference type="ChEBI" id="CHEBI:15377"/>
        <dbReference type="ChEBI" id="CHEBI:30879"/>
        <dbReference type="ChEBI" id="CHEBI:35924"/>
        <dbReference type="ChEBI" id="CHEBI:57925"/>
        <dbReference type="ChEBI" id="CHEBI:58297"/>
        <dbReference type="EC" id="1.11.1.27"/>
    </reaction>
</comment>
<comment type="subunit">
    <text evidence="1">Monomer.</text>
</comment>
<comment type="miscellaneous">
    <text evidence="1">The active site is a conserved redox-active cysteine residue, the peroxidatic cysteine (C(P)), which makes the nucleophilic attack on the peroxide substrate. The peroxide oxidizes the C(P)-SH to cysteine sulfenic acid (C(P)-SOH), which then reacts with another cysteine residue, the resolving cysteine (C(R)), to form a disulfide bridge. The disulfide is subsequently reduced by an appropriate electron donor to complete the catalytic cycle. In this 1-Cys peroxiredoxin, no C(R) is present and C(P) instead forms a disulfide with a cysteine from another protein or with a small thiol molecule.</text>
</comment>
<comment type="similarity">
    <text evidence="4">Belongs to the peroxiredoxin family. Prx5 subfamily.</text>
</comment>
<proteinExistence type="inferred from homology"/>
<keyword id="KW-0049">Antioxidant</keyword>
<keyword id="KW-0560">Oxidoreductase</keyword>
<keyword id="KW-0575">Peroxidase</keyword>
<keyword id="KW-0676">Redox-active center</keyword>
<sequence>MTMEKQVPIVTFRTRVRDESISGPNPYRWEDKTTDDYFSGKRVILFSLPGAFTPICSTFQLPDFESLYVEFKKNGIDDIYCLSVNDAFVMNAWGKSQGLKNVKLIPDGSGEFTRKMGMLVAKDNLGFGLRSWRYAAVINNGVVEGWFEEEGFGDNCATDPYGVSSPQNILKCLKAPAFV</sequence>
<evidence type="ECO:0000250" key="1">
    <source>
        <dbReference type="UniProtKB" id="A9PCL4"/>
    </source>
</evidence>
<evidence type="ECO:0000250" key="2">
    <source>
        <dbReference type="UniProtKB" id="P44758"/>
    </source>
</evidence>
<evidence type="ECO:0000255" key="3">
    <source>
        <dbReference type="PROSITE-ProRule" id="PRU00691"/>
    </source>
</evidence>
<evidence type="ECO:0000305" key="4"/>
<dbReference type="EC" id="1.11.1.27" evidence="2"/>
<dbReference type="EMBL" id="AJ005696">
    <property type="protein sequence ID" value="CAA06680.3"/>
    <property type="molecule type" value="Genomic_DNA"/>
</dbReference>
<dbReference type="RefSeq" id="WP_004678566.1">
    <property type="nucleotide sequence ID" value="NZ_JACJNQ010000026.1"/>
</dbReference>
<dbReference type="SMR" id="O69777"/>
<dbReference type="GeneID" id="45960575"/>
<dbReference type="PATRIC" id="fig|29449.15.peg.5173"/>
<dbReference type="OMA" id="AFVMFQW"/>
<dbReference type="BRENDA" id="1.11.1.24">
    <property type="organism ID" value="5340"/>
</dbReference>
<dbReference type="GO" id="GO:0005737">
    <property type="term" value="C:cytoplasm"/>
    <property type="evidence" value="ECO:0007669"/>
    <property type="project" value="TreeGrafter"/>
</dbReference>
<dbReference type="GO" id="GO:0008379">
    <property type="term" value="F:thioredoxin peroxidase activity"/>
    <property type="evidence" value="ECO:0007669"/>
    <property type="project" value="InterPro"/>
</dbReference>
<dbReference type="GO" id="GO:0045454">
    <property type="term" value="P:cell redox homeostasis"/>
    <property type="evidence" value="ECO:0007669"/>
    <property type="project" value="TreeGrafter"/>
</dbReference>
<dbReference type="GO" id="GO:0034599">
    <property type="term" value="P:cellular response to oxidative stress"/>
    <property type="evidence" value="ECO:0007669"/>
    <property type="project" value="InterPro"/>
</dbReference>
<dbReference type="GO" id="GO:0042744">
    <property type="term" value="P:hydrogen peroxide catabolic process"/>
    <property type="evidence" value="ECO:0007669"/>
    <property type="project" value="TreeGrafter"/>
</dbReference>
<dbReference type="CDD" id="cd03013">
    <property type="entry name" value="PRX5_like"/>
    <property type="match status" value="1"/>
</dbReference>
<dbReference type="Gene3D" id="3.40.30.10">
    <property type="entry name" value="Glutaredoxin"/>
    <property type="match status" value="1"/>
</dbReference>
<dbReference type="InterPro" id="IPR037944">
    <property type="entry name" value="PRX5-like"/>
</dbReference>
<dbReference type="InterPro" id="IPR013740">
    <property type="entry name" value="Redoxin"/>
</dbReference>
<dbReference type="InterPro" id="IPR036249">
    <property type="entry name" value="Thioredoxin-like_sf"/>
</dbReference>
<dbReference type="InterPro" id="IPR013766">
    <property type="entry name" value="Thioredoxin_domain"/>
</dbReference>
<dbReference type="PANTHER" id="PTHR10430">
    <property type="entry name" value="PEROXIREDOXIN"/>
    <property type="match status" value="1"/>
</dbReference>
<dbReference type="PANTHER" id="PTHR10430:SF16">
    <property type="entry name" value="PEROXIREDOXIN-5, MITOCHONDRIAL"/>
    <property type="match status" value="1"/>
</dbReference>
<dbReference type="Pfam" id="PF08534">
    <property type="entry name" value="Redoxin"/>
    <property type="match status" value="1"/>
</dbReference>
<dbReference type="SUPFAM" id="SSF52833">
    <property type="entry name" value="Thioredoxin-like"/>
    <property type="match status" value="1"/>
</dbReference>
<dbReference type="PROSITE" id="PS51352">
    <property type="entry name" value="THIOREDOXIN_2"/>
    <property type="match status" value="1"/>
</dbReference>
<organism>
    <name type="scientific">Rhizobium etli</name>
    <dbReference type="NCBI Taxonomy" id="29449"/>
    <lineage>
        <taxon>Bacteria</taxon>
        <taxon>Pseudomonadati</taxon>
        <taxon>Pseudomonadota</taxon>
        <taxon>Alphaproteobacteria</taxon>
        <taxon>Hyphomicrobiales</taxon>
        <taxon>Rhizobiaceae</taxon>
        <taxon>Rhizobium/Agrobacterium group</taxon>
        <taxon>Rhizobium</taxon>
    </lineage>
</organism>
<accession>O69777</accession>
<name>PRX5_RHIET</name>